<reference key="1">
    <citation type="journal article" date="1997" name="DNA Res.">
        <title>Structural analysis of Arabidopsis thaliana chromosome 5. III. Sequence features of the regions of 1,191,918 bp covered by seventeen physically assigned P1 clones.</title>
        <authorList>
            <person name="Nakamura Y."/>
            <person name="Sato S."/>
            <person name="Kaneko T."/>
            <person name="Kotani H."/>
            <person name="Asamizu E."/>
            <person name="Miyajima N."/>
            <person name="Tabata S."/>
        </authorList>
    </citation>
    <scope>NUCLEOTIDE SEQUENCE [LARGE SCALE GENOMIC DNA]</scope>
    <source>
        <strain>cv. Columbia</strain>
    </source>
</reference>
<reference key="2">
    <citation type="journal article" date="2017" name="Plant J.">
        <title>Araport11: a complete reannotation of the Arabidopsis thaliana reference genome.</title>
        <authorList>
            <person name="Cheng C.Y."/>
            <person name="Krishnakumar V."/>
            <person name="Chan A.P."/>
            <person name="Thibaud-Nissen F."/>
            <person name="Schobel S."/>
            <person name="Town C.D."/>
        </authorList>
    </citation>
    <scope>GENOME REANNOTATION</scope>
    <source>
        <strain>cv. Columbia</strain>
    </source>
</reference>
<reference key="3">
    <citation type="journal article" date="2003" name="Science">
        <title>Empirical analysis of transcriptional activity in the Arabidopsis genome.</title>
        <authorList>
            <person name="Yamada K."/>
            <person name="Lim J."/>
            <person name="Dale J.M."/>
            <person name="Chen H."/>
            <person name="Shinn P."/>
            <person name="Palm C.J."/>
            <person name="Southwick A.M."/>
            <person name="Wu H.C."/>
            <person name="Kim C.J."/>
            <person name="Nguyen M."/>
            <person name="Pham P.K."/>
            <person name="Cheuk R.F."/>
            <person name="Karlin-Newmann G."/>
            <person name="Liu S.X."/>
            <person name="Lam B."/>
            <person name="Sakano H."/>
            <person name="Wu T."/>
            <person name="Yu G."/>
            <person name="Miranda M."/>
            <person name="Quach H.L."/>
            <person name="Tripp M."/>
            <person name="Chang C.H."/>
            <person name="Lee J.M."/>
            <person name="Toriumi M.J."/>
            <person name="Chan M.M."/>
            <person name="Tang C.C."/>
            <person name="Onodera C.S."/>
            <person name="Deng J.M."/>
            <person name="Akiyama K."/>
            <person name="Ansari Y."/>
            <person name="Arakawa T."/>
            <person name="Banh J."/>
            <person name="Banno F."/>
            <person name="Bowser L."/>
            <person name="Brooks S.Y."/>
            <person name="Carninci P."/>
            <person name="Chao Q."/>
            <person name="Choy N."/>
            <person name="Enju A."/>
            <person name="Goldsmith A.D."/>
            <person name="Gurjal M."/>
            <person name="Hansen N.F."/>
            <person name="Hayashizaki Y."/>
            <person name="Johnson-Hopson C."/>
            <person name="Hsuan V.W."/>
            <person name="Iida K."/>
            <person name="Karnes M."/>
            <person name="Khan S."/>
            <person name="Koesema E."/>
            <person name="Ishida J."/>
            <person name="Jiang P.X."/>
            <person name="Jones T."/>
            <person name="Kawai J."/>
            <person name="Kamiya A."/>
            <person name="Meyers C."/>
            <person name="Nakajima M."/>
            <person name="Narusaka M."/>
            <person name="Seki M."/>
            <person name="Sakurai T."/>
            <person name="Satou M."/>
            <person name="Tamse R."/>
            <person name="Vaysberg M."/>
            <person name="Wallender E.K."/>
            <person name="Wong C."/>
            <person name="Yamamura Y."/>
            <person name="Yuan S."/>
            <person name="Shinozaki K."/>
            <person name="Davis R.W."/>
            <person name="Theologis A."/>
            <person name="Ecker J.R."/>
        </authorList>
    </citation>
    <scope>NUCLEOTIDE SEQUENCE [LARGE SCALE MRNA]</scope>
    <source>
        <strain>cv. Columbia</strain>
    </source>
</reference>
<reference key="4">
    <citation type="submission" date="2006-07" db="EMBL/GenBank/DDBJ databases">
        <title>Large-scale analysis of RIKEN Arabidopsis full-length (RAFL) cDNAs.</title>
        <authorList>
            <person name="Totoki Y."/>
            <person name="Seki M."/>
            <person name="Ishida J."/>
            <person name="Nakajima M."/>
            <person name="Enju A."/>
            <person name="Kamiya A."/>
            <person name="Narusaka M."/>
            <person name="Shin-i T."/>
            <person name="Nakagawa M."/>
            <person name="Sakamoto N."/>
            <person name="Oishi K."/>
            <person name="Kohara Y."/>
            <person name="Kobayashi M."/>
            <person name="Toyoda A."/>
            <person name="Sakaki Y."/>
            <person name="Sakurai T."/>
            <person name="Iida K."/>
            <person name="Akiyama K."/>
            <person name="Satou M."/>
            <person name="Toyoda T."/>
            <person name="Konagaya A."/>
            <person name="Carninci P."/>
            <person name="Kawai J."/>
            <person name="Hayashizaki Y."/>
            <person name="Shinozaki K."/>
        </authorList>
    </citation>
    <scope>NUCLEOTIDE SEQUENCE [LARGE SCALE MRNA] OF 164-463</scope>
    <source>
        <strain>cv. Columbia</strain>
    </source>
</reference>
<reference key="5">
    <citation type="journal article" date="2014" name="Plant J.">
        <title>PIRIN2 stabilizes cysteine protease XCP2 and increases susceptibility to the vascular pathogen Ralstonia solanacearum in Arabidopsis.</title>
        <authorList>
            <person name="Zhang B."/>
            <person name="Tremousaygue D."/>
            <person name="Denance N."/>
            <person name="van Esse H.P."/>
            <person name="Hoerger A.C."/>
            <person name="Dabos P."/>
            <person name="Goffner D."/>
            <person name="Thomma B.P."/>
            <person name="van der Hoorn R.A."/>
            <person name="Tuominen H."/>
        </authorList>
    </citation>
    <scope>INTERACTION WITH PRN2</scope>
</reference>
<reference key="6">
    <citation type="journal article" date="2015" name="J. Exp. Bot.">
        <title>A Kunitz-type protease inhibitor regulates programmed cell death during flower development in Arabidopsis thaliana.</title>
        <authorList>
            <person name="Boex-Fontvieille E."/>
            <person name="Rustgi S."/>
            <person name="Reinbothe S."/>
            <person name="Reinbothe C."/>
        </authorList>
    </citation>
    <scope>INTERACTION WITH WSCP</scope>
</reference>
<name>RD21B_ARATH</name>
<keyword id="KW-1015">Disulfide bond</keyword>
<keyword id="KW-0325">Glycoprotein</keyword>
<keyword id="KW-0378">Hydrolase</keyword>
<keyword id="KW-0645">Protease</keyword>
<keyword id="KW-1185">Reference proteome</keyword>
<keyword id="KW-0732">Signal</keyword>
<keyword id="KW-0788">Thiol protease</keyword>
<keyword id="KW-0865">Zymogen</keyword>
<protein>
    <recommendedName>
        <fullName evidence="13">Probable cysteine protease RD21B</fullName>
        <ecNumber evidence="4">3.4.22.-</ecNumber>
    </recommendedName>
</protein>
<accession>Q9FMH8</accession>
<accession>Q0WM94</accession>
<organism>
    <name type="scientific">Arabidopsis thaliana</name>
    <name type="common">Mouse-ear cress</name>
    <dbReference type="NCBI Taxonomy" id="3702"/>
    <lineage>
        <taxon>Eukaryota</taxon>
        <taxon>Viridiplantae</taxon>
        <taxon>Streptophyta</taxon>
        <taxon>Embryophyta</taxon>
        <taxon>Tracheophyta</taxon>
        <taxon>Spermatophyta</taxon>
        <taxon>Magnoliopsida</taxon>
        <taxon>eudicotyledons</taxon>
        <taxon>Gunneridae</taxon>
        <taxon>Pentapetalae</taxon>
        <taxon>rosids</taxon>
        <taxon>malvids</taxon>
        <taxon>Brassicales</taxon>
        <taxon>Brassicaceae</taxon>
        <taxon>Camelineae</taxon>
        <taxon>Arabidopsis</taxon>
    </lineage>
</organism>
<gene>
    <name evidence="13" type="primary">RD21B</name>
    <name evidence="14" type="ordered locus">At5g43060</name>
    <name evidence="15" type="ORF">MMG4.7</name>
</gene>
<sequence length="463" mass="51204">MGFLKLSPMILLLAMIGVSYAMDMSIISYDENHHITTETSRSDSEVERIYEAWMVEHGKKKMNQNGLGAEKDQRFEIFKDNLRFIDEHNTKNLSYKLGLTRFADLTNEEYRSMYLGAKPTKRVLKTSDRYQARVGDALPDSVDWRKEGAVADVKDQGSCGSCWAFSTIGAVEGINKIVTGDLISLSEQELVDCDTSYNQGCNGGLMDYAFEFIIKNGGIDTEADYPYKAADGRCDQNRKNAKVVTIDSYEDVPENSEASLKKALAHQPISVAIEAGGRAFQLYSSGVFDGLCGTELDHGVVAVGYGTENGKDYWIVRNSWGNRWGESGYIKMARNIEAPTGKCGIAMEASYPIKKGQNPPNPGPSPPSPIKPPTTCDKYFSCPESNTCCCLYKYGKYCFGWGCCPLEAATCCDDNSSCCPHEYPVCDVNRGTCLMSKNSPFSVKALKRTPAIPFWAKSRKHIA</sequence>
<dbReference type="EC" id="3.4.22.-" evidence="4"/>
<dbReference type="EMBL" id="AB008267">
    <property type="protein sequence ID" value="BAB08269.1"/>
    <property type="molecule type" value="Genomic_DNA"/>
</dbReference>
<dbReference type="EMBL" id="CP002688">
    <property type="protein sequence ID" value="AED94905.1"/>
    <property type="molecule type" value="Genomic_DNA"/>
</dbReference>
<dbReference type="EMBL" id="AY062608">
    <property type="protein sequence ID" value="AAL32686.1"/>
    <property type="molecule type" value="mRNA"/>
</dbReference>
<dbReference type="EMBL" id="AY114661">
    <property type="protein sequence ID" value="AAM47980.1"/>
    <property type="molecule type" value="mRNA"/>
</dbReference>
<dbReference type="EMBL" id="AK229936">
    <property type="protein sequence ID" value="BAF01762.1"/>
    <property type="molecule type" value="mRNA"/>
</dbReference>
<dbReference type="RefSeq" id="NP_568620.1">
    <property type="nucleotide sequence ID" value="NM_123672.4"/>
</dbReference>
<dbReference type="SMR" id="Q9FMH8"/>
<dbReference type="FunCoup" id="Q9FMH8">
    <property type="interactions" value="917"/>
</dbReference>
<dbReference type="IntAct" id="Q9FMH8">
    <property type="interactions" value="3"/>
</dbReference>
<dbReference type="STRING" id="3702.Q9FMH8"/>
<dbReference type="MEROPS" id="C01.A12"/>
<dbReference type="GlyCosmos" id="Q9FMH8">
    <property type="glycosylation" value="2 sites, No reported glycans"/>
</dbReference>
<dbReference type="GlyGen" id="Q9FMH8">
    <property type="glycosylation" value="2 sites"/>
</dbReference>
<dbReference type="MetOSite" id="Q9FMH8"/>
<dbReference type="PaxDb" id="3702-AT5G43060.1"/>
<dbReference type="ProteomicsDB" id="225926"/>
<dbReference type="EnsemblPlants" id="AT5G43060.1">
    <property type="protein sequence ID" value="AT5G43060.1"/>
    <property type="gene ID" value="AT5G43060"/>
</dbReference>
<dbReference type="GeneID" id="834321"/>
<dbReference type="Gramene" id="AT5G43060.1">
    <property type="protein sequence ID" value="AT5G43060.1"/>
    <property type="gene ID" value="AT5G43060"/>
</dbReference>
<dbReference type="KEGG" id="ath:AT5G43060"/>
<dbReference type="Araport" id="AT5G43060"/>
<dbReference type="TAIR" id="AT5G43060">
    <property type="gene designation" value="RD21B"/>
</dbReference>
<dbReference type="eggNOG" id="KOG1543">
    <property type="taxonomic scope" value="Eukaryota"/>
</dbReference>
<dbReference type="eggNOG" id="KOG4296">
    <property type="taxonomic scope" value="Eukaryota"/>
</dbReference>
<dbReference type="HOGENOM" id="CLU_012184_0_1_1"/>
<dbReference type="InParanoid" id="Q9FMH8"/>
<dbReference type="OMA" id="CIYEYAN"/>
<dbReference type="PhylomeDB" id="Q9FMH8"/>
<dbReference type="PRO" id="PR:Q9FMH8"/>
<dbReference type="Proteomes" id="UP000006548">
    <property type="component" value="Chromosome 5"/>
</dbReference>
<dbReference type="ExpressionAtlas" id="Q9FMH8">
    <property type="expression patterns" value="baseline and differential"/>
</dbReference>
<dbReference type="GO" id="GO:0005783">
    <property type="term" value="C:endoplasmic reticulum"/>
    <property type="evidence" value="ECO:0007005"/>
    <property type="project" value="TAIR"/>
</dbReference>
<dbReference type="GO" id="GO:0099503">
    <property type="term" value="C:secretory vesicle"/>
    <property type="evidence" value="ECO:0007005"/>
    <property type="project" value="TAIR"/>
</dbReference>
<dbReference type="GO" id="GO:0005773">
    <property type="term" value="C:vacuole"/>
    <property type="evidence" value="ECO:0007005"/>
    <property type="project" value="TAIR"/>
</dbReference>
<dbReference type="GO" id="GO:0008234">
    <property type="term" value="F:cysteine-type peptidase activity"/>
    <property type="evidence" value="ECO:0000314"/>
    <property type="project" value="UniProtKB"/>
</dbReference>
<dbReference type="GO" id="GO:0006508">
    <property type="term" value="P:proteolysis"/>
    <property type="evidence" value="ECO:0007669"/>
    <property type="project" value="UniProtKB-KW"/>
</dbReference>
<dbReference type="CDD" id="cd02248">
    <property type="entry name" value="Peptidase_C1A"/>
    <property type="match status" value="1"/>
</dbReference>
<dbReference type="FunFam" id="2.10.25.160:FF:000002">
    <property type="entry name" value="Cysteine protease 1"/>
    <property type="match status" value="1"/>
</dbReference>
<dbReference type="FunFam" id="3.90.70.10:FF:000068">
    <property type="entry name" value="Cysteine protease 1"/>
    <property type="match status" value="1"/>
</dbReference>
<dbReference type="Gene3D" id="3.90.70.10">
    <property type="entry name" value="Cysteine proteinases"/>
    <property type="match status" value="1"/>
</dbReference>
<dbReference type="Gene3D" id="2.10.25.160">
    <property type="entry name" value="Granulin"/>
    <property type="match status" value="1"/>
</dbReference>
<dbReference type="InterPro" id="IPR000118">
    <property type="entry name" value="Granulin"/>
</dbReference>
<dbReference type="InterPro" id="IPR037277">
    <property type="entry name" value="Granulin_sf"/>
</dbReference>
<dbReference type="InterPro" id="IPR038765">
    <property type="entry name" value="Papain-like_cys_pep_sf"/>
</dbReference>
<dbReference type="InterPro" id="IPR025661">
    <property type="entry name" value="Pept_asp_AS"/>
</dbReference>
<dbReference type="InterPro" id="IPR000169">
    <property type="entry name" value="Pept_cys_AS"/>
</dbReference>
<dbReference type="InterPro" id="IPR025660">
    <property type="entry name" value="Pept_his_AS"/>
</dbReference>
<dbReference type="InterPro" id="IPR013128">
    <property type="entry name" value="Peptidase_C1A"/>
</dbReference>
<dbReference type="InterPro" id="IPR000668">
    <property type="entry name" value="Peptidase_C1A_C"/>
</dbReference>
<dbReference type="InterPro" id="IPR039417">
    <property type="entry name" value="Peptidase_C1A_papain-like"/>
</dbReference>
<dbReference type="InterPro" id="IPR013201">
    <property type="entry name" value="Prot_inhib_I29"/>
</dbReference>
<dbReference type="PANTHER" id="PTHR12411">
    <property type="entry name" value="CYSTEINE PROTEASE FAMILY C1-RELATED"/>
    <property type="match status" value="1"/>
</dbReference>
<dbReference type="Pfam" id="PF00396">
    <property type="entry name" value="Granulin"/>
    <property type="match status" value="1"/>
</dbReference>
<dbReference type="Pfam" id="PF08246">
    <property type="entry name" value="Inhibitor_I29"/>
    <property type="match status" value="1"/>
</dbReference>
<dbReference type="Pfam" id="PF00112">
    <property type="entry name" value="Peptidase_C1"/>
    <property type="match status" value="1"/>
</dbReference>
<dbReference type="PRINTS" id="PR00705">
    <property type="entry name" value="PAPAIN"/>
</dbReference>
<dbReference type="SMART" id="SM00277">
    <property type="entry name" value="GRAN"/>
    <property type="match status" value="1"/>
</dbReference>
<dbReference type="SMART" id="SM00848">
    <property type="entry name" value="Inhibitor_I29"/>
    <property type="match status" value="1"/>
</dbReference>
<dbReference type="SMART" id="SM00645">
    <property type="entry name" value="Pept_C1"/>
    <property type="match status" value="1"/>
</dbReference>
<dbReference type="SUPFAM" id="SSF54001">
    <property type="entry name" value="Cysteine proteinases"/>
    <property type="match status" value="1"/>
</dbReference>
<dbReference type="SUPFAM" id="SSF57277">
    <property type="entry name" value="Granulin repeat"/>
    <property type="match status" value="1"/>
</dbReference>
<dbReference type="PROSITE" id="PS00640">
    <property type="entry name" value="THIOL_PROTEASE_ASN"/>
    <property type="match status" value="1"/>
</dbReference>
<dbReference type="PROSITE" id="PS00139">
    <property type="entry name" value="THIOL_PROTEASE_CYS"/>
    <property type="match status" value="1"/>
</dbReference>
<dbReference type="PROSITE" id="PS00639">
    <property type="entry name" value="THIOL_PROTEASE_HIS"/>
    <property type="match status" value="1"/>
</dbReference>
<proteinExistence type="evidence at protein level"/>
<evidence type="ECO:0000250" key="1">
    <source>
        <dbReference type="UniProtKB" id="P00785"/>
    </source>
</evidence>
<evidence type="ECO:0000250" key="2">
    <source>
        <dbReference type="UniProtKB" id="P25777"/>
    </source>
</evidence>
<evidence type="ECO:0000250" key="3">
    <source>
        <dbReference type="UniProtKB" id="P43297"/>
    </source>
</evidence>
<evidence type="ECO:0000250" key="4">
    <source>
        <dbReference type="UniProtKB" id="P80884"/>
    </source>
</evidence>
<evidence type="ECO:0000250" key="5">
    <source>
        <dbReference type="UniProtKB" id="P84346"/>
    </source>
</evidence>
<evidence type="ECO:0000250" key="6">
    <source>
        <dbReference type="UniProtKB" id="V5LU01"/>
    </source>
</evidence>
<evidence type="ECO:0000255" key="7"/>
<evidence type="ECO:0000255" key="8">
    <source>
        <dbReference type="PROSITE-ProRule" id="PRU00498"/>
    </source>
</evidence>
<evidence type="ECO:0000255" key="9">
    <source>
        <dbReference type="PROSITE-ProRule" id="PRU10088"/>
    </source>
</evidence>
<evidence type="ECO:0000255" key="10">
    <source>
        <dbReference type="PROSITE-ProRule" id="PRU10089"/>
    </source>
</evidence>
<evidence type="ECO:0000255" key="11">
    <source>
        <dbReference type="PROSITE-ProRule" id="PRU10090"/>
    </source>
</evidence>
<evidence type="ECO:0000269" key="12">
    <source>
    </source>
</evidence>
<evidence type="ECO:0000305" key="13"/>
<evidence type="ECO:0000312" key="14">
    <source>
        <dbReference type="Araport" id="AT5G43060"/>
    </source>
</evidence>
<evidence type="ECO:0000312" key="15">
    <source>
        <dbReference type="EMBL" id="BAB08269.1"/>
    </source>
</evidence>
<comment type="function">
    <text evidence="3">Probable thiol protease.</text>
</comment>
<comment type="subunit">
    <text evidence="12">Interacts with PRN2 (PubMed:24947605). Interacts with WSCP.</text>
</comment>
<comment type="interaction">
    <interactant intactId="EBI-1993115">
        <id>Q9FMH8</id>
    </interactant>
    <interactant intactId="EBI-449394">
        <id>Q9XI01</id>
        <label>PDIL1-1</label>
    </interactant>
    <organismsDiffer>false</organismsDiffer>
    <experiments>3</experiments>
</comment>
<comment type="similarity">
    <text evidence="13">Belongs to the peptidase C1 family.</text>
</comment>
<feature type="signal peptide" evidence="7">
    <location>
        <begin position="1"/>
        <end position="21"/>
    </location>
</feature>
<feature type="propeptide" id="PRO_0000436327" description="Activation peptide" evidence="1">
    <location>
        <begin position="22"/>
        <end position="137"/>
    </location>
</feature>
<feature type="chain" id="PRO_5006529477" description="Probable cysteine protease RD21B">
    <location>
        <begin position="138"/>
        <end position="353"/>
    </location>
</feature>
<feature type="propeptide" id="PRO_0000436328" description="Removed in mature form" evidence="6">
    <location>
        <begin position="354"/>
        <end position="463"/>
    </location>
</feature>
<feature type="active site" evidence="9">
    <location>
        <position position="162"/>
    </location>
</feature>
<feature type="active site" evidence="10">
    <location>
        <position position="298"/>
    </location>
</feature>
<feature type="active site" evidence="11">
    <location>
        <position position="318"/>
    </location>
</feature>
<feature type="glycosylation site" description="N-linked (GlcNAc...) asparagine" evidence="8">
    <location>
        <position position="92"/>
    </location>
</feature>
<feature type="glycosylation site" description="N-linked (GlcNAc...) asparagine" evidence="8">
    <location>
        <position position="415"/>
    </location>
</feature>
<feature type="disulfide bond" evidence="5">
    <location>
        <begin position="159"/>
        <end position="201"/>
    </location>
</feature>
<feature type="disulfide bond" evidence="5">
    <location>
        <begin position="193"/>
        <end position="234"/>
    </location>
</feature>
<feature type="disulfide bond" evidence="5">
    <location>
        <begin position="292"/>
        <end position="343"/>
    </location>
</feature>
<feature type="disulfide bond" evidence="2">
    <location>
        <begin position="376"/>
        <end position="388"/>
    </location>
</feature>
<feature type="disulfide bond" evidence="2">
    <location>
        <begin position="382"/>
        <end position="403"/>
    </location>
</feature>
<feature type="sequence conflict" description="In Ref. 4; BAF01762." evidence="13" ref="4">
    <original>D</original>
    <variation>G</variation>
    <location>
        <position position="312"/>
    </location>
</feature>